<comment type="function">
    <text evidence="1">One of the primary rRNA binding proteins, it binds directly to 16S rRNA where it helps nucleate assembly of the platform of the 30S subunit by binding and bridging several RNA helices of the 16S rRNA.</text>
</comment>
<comment type="function">
    <text evidence="1">Forms an intersubunit bridge (bridge B4) with the 23S rRNA of the 50S subunit in the ribosome.</text>
</comment>
<comment type="subunit">
    <text evidence="1">Part of the 30S ribosomal subunit. Forms a bridge to the 50S subunit in the 70S ribosome, contacting the 23S rRNA.</text>
</comment>
<comment type="similarity">
    <text evidence="1">Belongs to the universal ribosomal protein uS15 family.</text>
</comment>
<name>RS15_PROA2</name>
<protein>
    <recommendedName>
        <fullName evidence="1">Small ribosomal subunit protein uS15</fullName>
    </recommendedName>
    <alternativeName>
        <fullName evidence="2">30S ribosomal protein S15</fullName>
    </alternativeName>
</protein>
<evidence type="ECO:0000255" key="1">
    <source>
        <dbReference type="HAMAP-Rule" id="MF_01343"/>
    </source>
</evidence>
<evidence type="ECO:0000305" key="2"/>
<gene>
    <name evidence="1" type="primary">rpsO</name>
    <name type="ordered locus">Paes_0371</name>
</gene>
<dbReference type="EMBL" id="CP001108">
    <property type="protein sequence ID" value="ACF45428.1"/>
    <property type="molecule type" value="Genomic_DNA"/>
</dbReference>
<dbReference type="RefSeq" id="WP_012504965.1">
    <property type="nucleotide sequence ID" value="NC_011059.1"/>
</dbReference>
<dbReference type="SMR" id="B4S4T0"/>
<dbReference type="STRING" id="290512.Paes_0371"/>
<dbReference type="KEGG" id="paa:Paes_0371"/>
<dbReference type="eggNOG" id="COG0184">
    <property type="taxonomic scope" value="Bacteria"/>
</dbReference>
<dbReference type="HOGENOM" id="CLU_148518_0_0_10"/>
<dbReference type="Proteomes" id="UP000002725">
    <property type="component" value="Chromosome"/>
</dbReference>
<dbReference type="GO" id="GO:0022627">
    <property type="term" value="C:cytosolic small ribosomal subunit"/>
    <property type="evidence" value="ECO:0007669"/>
    <property type="project" value="TreeGrafter"/>
</dbReference>
<dbReference type="GO" id="GO:0019843">
    <property type="term" value="F:rRNA binding"/>
    <property type="evidence" value="ECO:0007669"/>
    <property type="project" value="UniProtKB-UniRule"/>
</dbReference>
<dbReference type="GO" id="GO:0003735">
    <property type="term" value="F:structural constituent of ribosome"/>
    <property type="evidence" value="ECO:0007669"/>
    <property type="project" value="InterPro"/>
</dbReference>
<dbReference type="GO" id="GO:0006412">
    <property type="term" value="P:translation"/>
    <property type="evidence" value="ECO:0007669"/>
    <property type="project" value="UniProtKB-UniRule"/>
</dbReference>
<dbReference type="CDD" id="cd00353">
    <property type="entry name" value="Ribosomal_S15p_S13e"/>
    <property type="match status" value="1"/>
</dbReference>
<dbReference type="FunFam" id="1.10.287.10:FF:000002">
    <property type="entry name" value="30S ribosomal protein S15"/>
    <property type="match status" value="1"/>
</dbReference>
<dbReference type="Gene3D" id="6.10.250.3130">
    <property type="match status" value="1"/>
</dbReference>
<dbReference type="Gene3D" id="1.10.287.10">
    <property type="entry name" value="S15/NS1, RNA-binding"/>
    <property type="match status" value="1"/>
</dbReference>
<dbReference type="HAMAP" id="MF_01343_B">
    <property type="entry name" value="Ribosomal_uS15_B"/>
    <property type="match status" value="1"/>
</dbReference>
<dbReference type="InterPro" id="IPR000589">
    <property type="entry name" value="Ribosomal_uS15"/>
</dbReference>
<dbReference type="InterPro" id="IPR005290">
    <property type="entry name" value="Ribosomal_uS15_bac-type"/>
</dbReference>
<dbReference type="InterPro" id="IPR009068">
    <property type="entry name" value="uS15_NS1_RNA-bd_sf"/>
</dbReference>
<dbReference type="NCBIfam" id="TIGR00952">
    <property type="entry name" value="S15_bact"/>
    <property type="match status" value="1"/>
</dbReference>
<dbReference type="PANTHER" id="PTHR23321">
    <property type="entry name" value="RIBOSOMAL PROTEIN S15, BACTERIAL AND ORGANELLAR"/>
    <property type="match status" value="1"/>
</dbReference>
<dbReference type="PANTHER" id="PTHR23321:SF26">
    <property type="entry name" value="SMALL RIBOSOMAL SUBUNIT PROTEIN US15M"/>
    <property type="match status" value="1"/>
</dbReference>
<dbReference type="Pfam" id="PF00312">
    <property type="entry name" value="Ribosomal_S15"/>
    <property type="match status" value="1"/>
</dbReference>
<dbReference type="SMART" id="SM01387">
    <property type="entry name" value="Ribosomal_S15"/>
    <property type="match status" value="1"/>
</dbReference>
<dbReference type="SUPFAM" id="SSF47060">
    <property type="entry name" value="S15/NS1 RNA-binding domain"/>
    <property type="match status" value="1"/>
</dbReference>
<dbReference type="PROSITE" id="PS00362">
    <property type="entry name" value="RIBOSOMAL_S15"/>
    <property type="match status" value="1"/>
</dbReference>
<keyword id="KW-0687">Ribonucleoprotein</keyword>
<keyword id="KW-0689">Ribosomal protein</keyword>
<keyword id="KW-0694">RNA-binding</keyword>
<keyword id="KW-0699">rRNA-binding</keyword>
<accession>B4S4T0</accession>
<sequence>MSLTKEKKAEIINTFGGSDKNTGKTEVQIALYSRRISDLTGHLKEHPKDKHSRHGLLKLVGKRKSLLAYLKNTEIERYRQVLADLDLRK</sequence>
<feature type="chain" id="PRO_1000143152" description="Small ribosomal subunit protein uS15">
    <location>
        <begin position="1"/>
        <end position="89"/>
    </location>
</feature>
<reference key="1">
    <citation type="submission" date="2008-06" db="EMBL/GenBank/DDBJ databases">
        <title>Complete sequence of chromosome of Prosthecochloris aestuarii DSM 271.</title>
        <authorList>
            <consortium name="US DOE Joint Genome Institute"/>
            <person name="Lucas S."/>
            <person name="Copeland A."/>
            <person name="Lapidus A."/>
            <person name="Glavina del Rio T."/>
            <person name="Dalin E."/>
            <person name="Tice H."/>
            <person name="Bruce D."/>
            <person name="Goodwin L."/>
            <person name="Pitluck S."/>
            <person name="Schmutz J."/>
            <person name="Larimer F."/>
            <person name="Land M."/>
            <person name="Hauser L."/>
            <person name="Kyrpides N."/>
            <person name="Anderson I."/>
            <person name="Liu Z."/>
            <person name="Li T."/>
            <person name="Zhao F."/>
            <person name="Overmann J."/>
            <person name="Bryant D.A."/>
            <person name="Richardson P."/>
        </authorList>
    </citation>
    <scope>NUCLEOTIDE SEQUENCE [LARGE SCALE GENOMIC DNA]</scope>
    <source>
        <strain>DSM 271 / SK 413</strain>
    </source>
</reference>
<proteinExistence type="inferred from homology"/>
<organism>
    <name type="scientific">Prosthecochloris aestuarii (strain DSM 271 / SK 413)</name>
    <dbReference type="NCBI Taxonomy" id="290512"/>
    <lineage>
        <taxon>Bacteria</taxon>
        <taxon>Pseudomonadati</taxon>
        <taxon>Chlorobiota</taxon>
        <taxon>Chlorobiia</taxon>
        <taxon>Chlorobiales</taxon>
        <taxon>Chlorobiaceae</taxon>
        <taxon>Prosthecochloris</taxon>
    </lineage>
</organism>